<evidence type="ECO:0000255" key="1">
    <source>
        <dbReference type="HAMAP-Rule" id="MF_00518"/>
    </source>
</evidence>
<gene>
    <name evidence="1" type="primary">dtd</name>
    <name type="ordered locus">RSc0497</name>
    <name type="ORF">RS05026</name>
</gene>
<protein>
    <recommendedName>
        <fullName evidence="1">D-aminoacyl-tRNA deacylase</fullName>
        <shortName evidence="1">DTD</shortName>
        <ecNumber evidence="1">3.1.1.96</ecNumber>
    </recommendedName>
    <alternativeName>
        <fullName evidence="1">Gly-tRNA(Ala) deacylase</fullName>
    </alternativeName>
</protein>
<name>DTD_RALN1</name>
<accession>Q8Y239</accession>
<proteinExistence type="inferred from homology"/>
<feature type="chain" id="PRO_0000164577" description="D-aminoacyl-tRNA deacylase">
    <location>
        <begin position="1"/>
        <end position="166"/>
    </location>
</feature>
<feature type="short sequence motif" description="Gly-cisPro motif, important for rejection of L-amino acids" evidence="1">
    <location>
        <begin position="142"/>
        <end position="143"/>
    </location>
</feature>
<sequence>MIGLIQRVSQAAVRVDGRVVGEIGPGLLALVCAERGDTVAEADRLLEKLLNYRVFSDAQGKMNLPVRNIDGNGLAGGLLVVSQFTLAADTKSGTRPSFTPAAAPEAGRRLYEHFVARARQQHPIVATGEFGAMMQVSLVNDGPVTFWLQVAPQAVRAGEAETAKSA</sequence>
<organism>
    <name type="scientific">Ralstonia nicotianae (strain ATCC BAA-1114 / GMI1000)</name>
    <name type="common">Ralstonia solanacearum</name>
    <dbReference type="NCBI Taxonomy" id="267608"/>
    <lineage>
        <taxon>Bacteria</taxon>
        <taxon>Pseudomonadati</taxon>
        <taxon>Pseudomonadota</taxon>
        <taxon>Betaproteobacteria</taxon>
        <taxon>Burkholderiales</taxon>
        <taxon>Burkholderiaceae</taxon>
        <taxon>Ralstonia</taxon>
        <taxon>Ralstonia solanacearum species complex</taxon>
    </lineage>
</organism>
<dbReference type="EC" id="3.1.1.96" evidence="1"/>
<dbReference type="EMBL" id="AL646052">
    <property type="protein sequence ID" value="CAD14025.1"/>
    <property type="molecule type" value="Genomic_DNA"/>
</dbReference>
<dbReference type="RefSeq" id="WP_011000456.1">
    <property type="nucleotide sequence ID" value="NC_003295.1"/>
</dbReference>
<dbReference type="SMR" id="Q8Y239"/>
<dbReference type="STRING" id="267608.RSc0497"/>
<dbReference type="EnsemblBacteria" id="CAD14025">
    <property type="protein sequence ID" value="CAD14025"/>
    <property type="gene ID" value="RSc0497"/>
</dbReference>
<dbReference type="KEGG" id="rso:RSc0497"/>
<dbReference type="eggNOG" id="COG1490">
    <property type="taxonomic scope" value="Bacteria"/>
</dbReference>
<dbReference type="HOGENOM" id="CLU_076901_1_1_4"/>
<dbReference type="Proteomes" id="UP000001436">
    <property type="component" value="Chromosome"/>
</dbReference>
<dbReference type="GO" id="GO:0005737">
    <property type="term" value="C:cytoplasm"/>
    <property type="evidence" value="ECO:0007669"/>
    <property type="project" value="UniProtKB-SubCell"/>
</dbReference>
<dbReference type="GO" id="GO:0051500">
    <property type="term" value="F:D-tyrosyl-tRNA(Tyr) deacylase activity"/>
    <property type="evidence" value="ECO:0007669"/>
    <property type="project" value="TreeGrafter"/>
</dbReference>
<dbReference type="GO" id="GO:0106026">
    <property type="term" value="F:Gly-tRNA(Ala) deacylase activity"/>
    <property type="evidence" value="ECO:0007669"/>
    <property type="project" value="UniProtKB-UniRule"/>
</dbReference>
<dbReference type="GO" id="GO:0043908">
    <property type="term" value="F:Ser(Gly)-tRNA(Ala) hydrolase activity"/>
    <property type="evidence" value="ECO:0007669"/>
    <property type="project" value="UniProtKB-UniRule"/>
</dbReference>
<dbReference type="GO" id="GO:0000049">
    <property type="term" value="F:tRNA binding"/>
    <property type="evidence" value="ECO:0007669"/>
    <property type="project" value="UniProtKB-UniRule"/>
</dbReference>
<dbReference type="GO" id="GO:0019478">
    <property type="term" value="P:D-amino acid catabolic process"/>
    <property type="evidence" value="ECO:0007669"/>
    <property type="project" value="UniProtKB-UniRule"/>
</dbReference>
<dbReference type="CDD" id="cd00563">
    <property type="entry name" value="Dtyr_deacylase"/>
    <property type="match status" value="1"/>
</dbReference>
<dbReference type="FunFam" id="3.50.80.10:FF:000001">
    <property type="entry name" value="D-aminoacyl-tRNA deacylase"/>
    <property type="match status" value="1"/>
</dbReference>
<dbReference type="Gene3D" id="3.50.80.10">
    <property type="entry name" value="D-tyrosyl-tRNA(Tyr) deacylase"/>
    <property type="match status" value="1"/>
</dbReference>
<dbReference type="HAMAP" id="MF_00518">
    <property type="entry name" value="Deacylase_Dtd"/>
    <property type="match status" value="1"/>
</dbReference>
<dbReference type="InterPro" id="IPR003732">
    <property type="entry name" value="Daa-tRNA_deacyls_DTD"/>
</dbReference>
<dbReference type="InterPro" id="IPR023509">
    <property type="entry name" value="DTD-like_sf"/>
</dbReference>
<dbReference type="NCBIfam" id="TIGR00256">
    <property type="entry name" value="D-aminoacyl-tRNA deacylase"/>
    <property type="match status" value="1"/>
</dbReference>
<dbReference type="PANTHER" id="PTHR10472:SF5">
    <property type="entry name" value="D-AMINOACYL-TRNA DEACYLASE 1"/>
    <property type="match status" value="1"/>
</dbReference>
<dbReference type="PANTHER" id="PTHR10472">
    <property type="entry name" value="D-TYROSYL-TRNA TYR DEACYLASE"/>
    <property type="match status" value="1"/>
</dbReference>
<dbReference type="Pfam" id="PF02580">
    <property type="entry name" value="Tyr_Deacylase"/>
    <property type="match status" value="1"/>
</dbReference>
<dbReference type="SUPFAM" id="SSF69500">
    <property type="entry name" value="DTD-like"/>
    <property type="match status" value="1"/>
</dbReference>
<comment type="function">
    <text evidence="1">An aminoacyl-tRNA editing enzyme that deacylates mischarged D-aminoacyl-tRNAs. Also deacylates mischarged glycyl-tRNA(Ala), protecting cells against glycine mischarging by AlaRS. Acts via tRNA-based rather than protein-based catalysis; rejects L-amino acids rather than detecting D-amino acids in the active site. By recycling D-aminoacyl-tRNA to D-amino acids and free tRNA molecules, this enzyme counteracts the toxicity associated with the formation of D-aminoacyl-tRNA entities in vivo and helps enforce protein L-homochirality.</text>
</comment>
<comment type="catalytic activity">
    <reaction evidence="1">
        <text>glycyl-tRNA(Ala) + H2O = tRNA(Ala) + glycine + H(+)</text>
        <dbReference type="Rhea" id="RHEA:53744"/>
        <dbReference type="Rhea" id="RHEA-COMP:9657"/>
        <dbReference type="Rhea" id="RHEA-COMP:13640"/>
        <dbReference type="ChEBI" id="CHEBI:15377"/>
        <dbReference type="ChEBI" id="CHEBI:15378"/>
        <dbReference type="ChEBI" id="CHEBI:57305"/>
        <dbReference type="ChEBI" id="CHEBI:78442"/>
        <dbReference type="ChEBI" id="CHEBI:78522"/>
        <dbReference type="EC" id="3.1.1.96"/>
    </reaction>
</comment>
<comment type="catalytic activity">
    <reaction evidence="1">
        <text>a D-aminoacyl-tRNA + H2O = a tRNA + a D-alpha-amino acid + H(+)</text>
        <dbReference type="Rhea" id="RHEA:13953"/>
        <dbReference type="Rhea" id="RHEA-COMP:10123"/>
        <dbReference type="Rhea" id="RHEA-COMP:10124"/>
        <dbReference type="ChEBI" id="CHEBI:15377"/>
        <dbReference type="ChEBI" id="CHEBI:15378"/>
        <dbReference type="ChEBI" id="CHEBI:59871"/>
        <dbReference type="ChEBI" id="CHEBI:78442"/>
        <dbReference type="ChEBI" id="CHEBI:79333"/>
        <dbReference type="EC" id="3.1.1.96"/>
    </reaction>
</comment>
<comment type="subunit">
    <text evidence="1">Homodimer.</text>
</comment>
<comment type="subcellular location">
    <subcellularLocation>
        <location evidence="1">Cytoplasm</location>
    </subcellularLocation>
</comment>
<comment type="domain">
    <text evidence="1">A Gly-cisPro motif from one monomer fits into the active site of the other monomer to allow specific chiral rejection of L-amino acids.</text>
</comment>
<comment type="similarity">
    <text evidence="1">Belongs to the DTD family.</text>
</comment>
<reference key="1">
    <citation type="journal article" date="2002" name="Nature">
        <title>Genome sequence of the plant pathogen Ralstonia solanacearum.</title>
        <authorList>
            <person name="Salanoubat M."/>
            <person name="Genin S."/>
            <person name="Artiguenave F."/>
            <person name="Gouzy J."/>
            <person name="Mangenot S."/>
            <person name="Arlat M."/>
            <person name="Billault A."/>
            <person name="Brottier P."/>
            <person name="Camus J.-C."/>
            <person name="Cattolico L."/>
            <person name="Chandler M."/>
            <person name="Choisne N."/>
            <person name="Claudel-Renard C."/>
            <person name="Cunnac S."/>
            <person name="Demange N."/>
            <person name="Gaspin C."/>
            <person name="Lavie M."/>
            <person name="Moisan A."/>
            <person name="Robert C."/>
            <person name="Saurin W."/>
            <person name="Schiex T."/>
            <person name="Siguier P."/>
            <person name="Thebault P."/>
            <person name="Whalen M."/>
            <person name="Wincker P."/>
            <person name="Levy M."/>
            <person name="Weissenbach J."/>
            <person name="Boucher C.A."/>
        </authorList>
    </citation>
    <scope>NUCLEOTIDE SEQUENCE [LARGE SCALE GENOMIC DNA]</scope>
    <source>
        <strain>ATCC BAA-1114 / GMI1000</strain>
    </source>
</reference>
<keyword id="KW-0963">Cytoplasm</keyword>
<keyword id="KW-0378">Hydrolase</keyword>
<keyword id="KW-1185">Reference proteome</keyword>
<keyword id="KW-0694">RNA-binding</keyword>
<keyword id="KW-0820">tRNA-binding</keyword>